<gene>
    <name evidence="2" type="primary">infB</name>
    <name type="ordered locus">PEPE_0890</name>
</gene>
<sequence length="918" mass="101974">MGKKRIYELAKEINVSSKDIIEKAQADGLDVKNHMSTLDDASEKHLRNAFKKNTTTTKPEEKRTPKFRSSKTGKTVVKKSDHPAADGTKGIQRLKSSNNESTTRNNNNNKNGNQNRNNTNGRPNNNQNRPNNNRNQNNNRNGNRPNQPKRDEKQDRIRASVAEAARMAAQANREIANEKPQANRQRTNSAKPGEQRREGRNNQNRPNNNNRNGNNVNRTNNNNRPNNNNRNNENRPSRPNNTNQTTNNRPANNTTRPAAPAATTANNSGEKKQDRFSGRNNNSRGGNRFGNNQNRPFNKENRKNKKRNRKAKRDGRMKETTNKVVTVRKERPLPDVLEYSEGINVAEIAKKIHREPAEIIKKLFMMGVMVNQNQSLDNDTVELLAADYGIEAQQKVEVDISDIDKIFEDEEKNTTNLVSRPPVVTIMGHVDHGKTTLLDKLRHSHITEGEAGGITQGIGAYQLKHDDKLITFLDTPGHAAFTEMRARGADVTDITILVVAADDGVMPQTIEAINHAKAANVPIIVAVNKIDKQGANPNHVMEQLTEYGLIPESWGGDTIFVEISAKLGQNIDELLDMILLQAEVLELKANPDQNAAGSVIEAQLDPGKGSIATILVQQGTMHVGDPIVIGNTFGRIRTMVNEHGRRVKEATPSTPVEITGLNGVPEAGDRFVVFDDEKSARAAGEERAKRAQMEERKRSNHVTLDNLFDSLKEGEMKKVDIIIKADVQGSVEALADSLQKIEVEGVRVNIIHKAVGAINESDVTLAAASNAIIIGFNVRPTAQAKQMADSEDVDIRLHRVIYNAIDEVESAMKGMLEPVYEEEIIGQVDIRETYKVSRVGTIAGGFVTEGFITRDSGVRLIRDGVVIYEGKLGSLKRFKDDVKEVKRGFELGLTVENYNDIKIGDVIEAYRMKEVPVE</sequence>
<dbReference type="EMBL" id="CP000422">
    <property type="protein sequence ID" value="ABJ67949.1"/>
    <property type="molecule type" value="Genomic_DNA"/>
</dbReference>
<dbReference type="RefSeq" id="WP_011673322.1">
    <property type="nucleotide sequence ID" value="NC_008525.1"/>
</dbReference>
<dbReference type="SMR" id="Q03FS3"/>
<dbReference type="STRING" id="278197.PEPE_0890"/>
<dbReference type="GeneID" id="33062166"/>
<dbReference type="KEGG" id="ppe:PEPE_0890"/>
<dbReference type="eggNOG" id="COG0532">
    <property type="taxonomic scope" value="Bacteria"/>
</dbReference>
<dbReference type="HOGENOM" id="CLU_006301_5_0_9"/>
<dbReference type="OrthoDB" id="9811804at2"/>
<dbReference type="Proteomes" id="UP000000773">
    <property type="component" value="Chromosome"/>
</dbReference>
<dbReference type="GO" id="GO:0005829">
    <property type="term" value="C:cytosol"/>
    <property type="evidence" value="ECO:0007669"/>
    <property type="project" value="TreeGrafter"/>
</dbReference>
<dbReference type="GO" id="GO:0005525">
    <property type="term" value="F:GTP binding"/>
    <property type="evidence" value="ECO:0007669"/>
    <property type="project" value="UniProtKB-KW"/>
</dbReference>
<dbReference type="GO" id="GO:0003924">
    <property type="term" value="F:GTPase activity"/>
    <property type="evidence" value="ECO:0007669"/>
    <property type="project" value="UniProtKB-UniRule"/>
</dbReference>
<dbReference type="GO" id="GO:0003743">
    <property type="term" value="F:translation initiation factor activity"/>
    <property type="evidence" value="ECO:0007669"/>
    <property type="project" value="UniProtKB-UniRule"/>
</dbReference>
<dbReference type="CDD" id="cd01887">
    <property type="entry name" value="IF2_eIF5B"/>
    <property type="match status" value="1"/>
</dbReference>
<dbReference type="CDD" id="cd03702">
    <property type="entry name" value="IF2_mtIF2_II"/>
    <property type="match status" value="1"/>
</dbReference>
<dbReference type="CDD" id="cd03692">
    <property type="entry name" value="mtIF2_IVc"/>
    <property type="match status" value="1"/>
</dbReference>
<dbReference type="FunFam" id="2.40.30.10:FF:000007">
    <property type="entry name" value="Translation initiation factor IF-2"/>
    <property type="match status" value="1"/>
</dbReference>
<dbReference type="FunFam" id="2.40.30.10:FF:000008">
    <property type="entry name" value="Translation initiation factor IF-2"/>
    <property type="match status" value="1"/>
</dbReference>
<dbReference type="FunFam" id="3.40.50.10050:FF:000001">
    <property type="entry name" value="Translation initiation factor IF-2"/>
    <property type="match status" value="1"/>
</dbReference>
<dbReference type="FunFam" id="3.40.50.300:FF:000019">
    <property type="entry name" value="Translation initiation factor IF-2"/>
    <property type="match status" value="1"/>
</dbReference>
<dbReference type="Gene3D" id="1.10.10.2480">
    <property type="match status" value="1"/>
</dbReference>
<dbReference type="Gene3D" id="3.40.50.300">
    <property type="entry name" value="P-loop containing nucleotide triphosphate hydrolases"/>
    <property type="match status" value="1"/>
</dbReference>
<dbReference type="Gene3D" id="2.40.30.10">
    <property type="entry name" value="Translation factors"/>
    <property type="match status" value="2"/>
</dbReference>
<dbReference type="Gene3D" id="3.40.50.10050">
    <property type="entry name" value="Translation initiation factor IF- 2, domain 3"/>
    <property type="match status" value="1"/>
</dbReference>
<dbReference type="HAMAP" id="MF_00100_B">
    <property type="entry name" value="IF_2_B"/>
    <property type="match status" value="1"/>
</dbReference>
<dbReference type="InterPro" id="IPR053905">
    <property type="entry name" value="EF-G-like_DII"/>
</dbReference>
<dbReference type="InterPro" id="IPR044145">
    <property type="entry name" value="IF2_II"/>
</dbReference>
<dbReference type="InterPro" id="IPR006847">
    <property type="entry name" value="IF2_N"/>
</dbReference>
<dbReference type="InterPro" id="IPR027417">
    <property type="entry name" value="P-loop_NTPase"/>
</dbReference>
<dbReference type="InterPro" id="IPR005225">
    <property type="entry name" value="Small_GTP-bd"/>
</dbReference>
<dbReference type="InterPro" id="IPR000795">
    <property type="entry name" value="T_Tr_GTP-bd_dom"/>
</dbReference>
<dbReference type="InterPro" id="IPR000178">
    <property type="entry name" value="TF_IF2_bacterial-like"/>
</dbReference>
<dbReference type="InterPro" id="IPR015760">
    <property type="entry name" value="TIF_IF2"/>
</dbReference>
<dbReference type="InterPro" id="IPR023115">
    <property type="entry name" value="TIF_IF2_dom3"/>
</dbReference>
<dbReference type="InterPro" id="IPR036925">
    <property type="entry name" value="TIF_IF2_dom3_sf"/>
</dbReference>
<dbReference type="InterPro" id="IPR009000">
    <property type="entry name" value="Transl_B-barrel_sf"/>
</dbReference>
<dbReference type="NCBIfam" id="TIGR00487">
    <property type="entry name" value="IF-2"/>
    <property type="match status" value="1"/>
</dbReference>
<dbReference type="NCBIfam" id="TIGR00231">
    <property type="entry name" value="small_GTP"/>
    <property type="match status" value="1"/>
</dbReference>
<dbReference type="PANTHER" id="PTHR43381:SF5">
    <property type="entry name" value="TR-TYPE G DOMAIN-CONTAINING PROTEIN"/>
    <property type="match status" value="1"/>
</dbReference>
<dbReference type="PANTHER" id="PTHR43381">
    <property type="entry name" value="TRANSLATION INITIATION FACTOR IF-2-RELATED"/>
    <property type="match status" value="1"/>
</dbReference>
<dbReference type="Pfam" id="PF22042">
    <property type="entry name" value="EF-G_D2"/>
    <property type="match status" value="1"/>
</dbReference>
<dbReference type="Pfam" id="PF00009">
    <property type="entry name" value="GTP_EFTU"/>
    <property type="match status" value="1"/>
</dbReference>
<dbReference type="Pfam" id="PF11987">
    <property type="entry name" value="IF-2"/>
    <property type="match status" value="1"/>
</dbReference>
<dbReference type="Pfam" id="PF04760">
    <property type="entry name" value="IF2_N"/>
    <property type="match status" value="2"/>
</dbReference>
<dbReference type="SUPFAM" id="SSF52156">
    <property type="entry name" value="Initiation factor IF2/eIF5b, domain 3"/>
    <property type="match status" value="1"/>
</dbReference>
<dbReference type="SUPFAM" id="SSF52540">
    <property type="entry name" value="P-loop containing nucleoside triphosphate hydrolases"/>
    <property type="match status" value="1"/>
</dbReference>
<dbReference type="SUPFAM" id="SSF50447">
    <property type="entry name" value="Translation proteins"/>
    <property type="match status" value="2"/>
</dbReference>
<dbReference type="PROSITE" id="PS51722">
    <property type="entry name" value="G_TR_2"/>
    <property type="match status" value="1"/>
</dbReference>
<protein>
    <recommendedName>
        <fullName evidence="2">Translation initiation factor IF-2</fullName>
    </recommendedName>
</protein>
<name>IF2_PEDPA</name>
<comment type="function">
    <text evidence="2">One of the essential components for the initiation of protein synthesis. Protects formylmethionyl-tRNA from spontaneous hydrolysis and promotes its binding to the 30S ribosomal subunits. Also involved in the hydrolysis of GTP during the formation of the 70S ribosomal complex.</text>
</comment>
<comment type="subcellular location">
    <subcellularLocation>
        <location evidence="2">Cytoplasm</location>
    </subcellularLocation>
</comment>
<comment type="similarity">
    <text evidence="2">Belongs to the TRAFAC class translation factor GTPase superfamily. Classic translation factor GTPase family. IF-2 subfamily.</text>
</comment>
<organism>
    <name type="scientific">Pediococcus pentosaceus (strain ATCC 25745 / CCUG 21536 / LMG 10740 / 183-1w)</name>
    <dbReference type="NCBI Taxonomy" id="278197"/>
    <lineage>
        <taxon>Bacteria</taxon>
        <taxon>Bacillati</taxon>
        <taxon>Bacillota</taxon>
        <taxon>Bacilli</taxon>
        <taxon>Lactobacillales</taxon>
        <taxon>Lactobacillaceae</taxon>
        <taxon>Pediococcus</taxon>
    </lineage>
</organism>
<keyword id="KW-0963">Cytoplasm</keyword>
<keyword id="KW-0342">GTP-binding</keyword>
<keyword id="KW-0396">Initiation factor</keyword>
<keyword id="KW-0547">Nucleotide-binding</keyword>
<keyword id="KW-0648">Protein biosynthesis</keyword>
<proteinExistence type="inferred from homology"/>
<reference key="1">
    <citation type="journal article" date="2006" name="Proc. Natl. Acad. Sci. U.S.A.">
        <title>Comparative genomics of the lactic acid bacteria.</title>
        <authorList>
            <person name="Makarova K.S."/>
            <person name="Slesarev A."/>
            <person name="Wolf Y.I."/>
            <person name="Sorokin A."/>
            <person name="Mirkin B."/>
            <person name="Koonin E.V."/>
            <person name="Pavlov A."/>
            <person name="Pavlova N."/>
            <person name="Karamychev V."/>
            <person name="Polouchine N."/>
            <person name="Shakhova V."/>
            <person name="Grigoriev I."/>
            <person name="Lou Y."/>
            <person name="Rohksar D."/>
            <person name="Lucas S."/>
            <person name="Huang K."/>
            <person name="Goodstein D.M."/>
            <person name="Hawkins T."/>
            <person name="Plengvidhya V."/>
            <person name="Welker D."/>
            <person name="Hughes J."/>
            <person name="Goh Y."/>
            <person name="Benson A."/>
            <person name="Baldwin K."/>
            <person name="Lee J.-H."/>
            <person name="Diaz-Muniz I."/>
            <person name="Dosti B."/>
            <person name="Smeianov V."/>
            <person name="Wechter W."/>
            <person name="Barabote R."/>
            <person name="Lorca G."/>
            <person name="Altermann E."/>
            <person name="Barrangou R."/>
            <person name="Ganesan B."/>
            <person name="Xie Y."/>
            <person name="Rawsthorne H."/>
            <person name="Tamir D."/>
            <person name="Parker C."/>
            <person name="Breidt F."/>
            <person name="Broadbent J.R."/>
            <person name="Hutkins R."/>
            <person name="O'Sullivan D."/>
            <person name="Steele J."/>
            <person name="Unlu G."/>
            <person name="Saier M.H. Jr."/>
            <person name="Klaenhammer T."/>
            <person name="Richardson P."/>
            <person name="Kozyavkin S."/>
            <person name="Weimer B.C."/>
            <person name="Mills D.A."/>
        </authorList>
    </citation>
    <scope>NUCLEOTIDE SEQUENCE [LARGE SCALE GENOMIC DNA]</scope>
    <source>
        <strain>ATCC 25745 / CCUG 21536 / LMG 10740 / 183-1w</strain>
    </source>
</reference>
<feature type="chain" id="PRO_1000008294" description="Translation initiation factor IF-2">
    <location>
        <begin position="1"/>
        <end position="918"/>
    </location>
</feature>
<feature type="domain" description="tr-type G">
    <location>
        <begin position="419"/>
        <end position="588"/>
    </location>
</feature>
<feature type="region of interest" description="Disordered" evidence="3">
    <location>
        <begin position="39"/>
        <end position="321"/>
    </location>
</feature>
<feature type="region of interest" description="G1" evidence="1">
    <location>
        <begin position="428"/>
        <end position="435"/>
    </location>
</feature>
<feature type="region of interest" description="G2" evidence="1">
    <location>
        <begin position="453"/>
        <end position="457"/>
    </location>
</feature>
<feature type="region of interest" description="G3" evidence="1">
    <location>
        <begin position="474"/>
        <end position="477"/>
    </location>
</feature>
<feature type="region of interest" description="G4" evidence="1">
    <location>
        <begin position="528"/>
        <end position="531"/>
    </location>
</feature>
<feature type="region of interest" description="G5" evidence="1">
    <location>
        <begin position="564"/>
        <end position="566"/>
    </location>
</feature>
<feature type="compositionally biased region" description="Low complexity" evidence="3">
    <location>
        <begin position="95"/>
        <end position="146"/>
    </location>
</feature>
<feature type="compositionally biased region" description="Basic and acidic residues" evidence="3">
    <location>
        <begin position="148"/>
        <end position="158"/>
    </location>
</feature>
<feature type="compositionally biased region" description="Low complexity" evidence="3">
    <location>
        <begin position="159"/>
        <end position="174"/>
    </location>
</feature>
<feature type="compositionally biased region" description="Polar residues" evidence="3">
    <location>
        <begin position="180"/>
        <end position="190"/>
    </location>
</feature>
<feature type="compositionally biased region" description="Low complexity" evidence="3">
    <location>
        <begin position="201"/>
        <end position="231"/>
    </location>
</feature>
<feature type="compositionally biased region" description="Low complexity" evidence="3">
    <location>
        <begin position="237"/>
        <end position="267"/>
    </location>
</feature>
<feature type="compositionally biased region" description="Low complexity" evidence="3">
    <location>
        <begin position="278"/>
        <end position="296"/>
    </location>
</feature>
<feature type="compositionally biased region" description="Basic residues" evidence="3">
    <location>
        <begin position="302"/>
        <end position="313"/>
    </location>
</feature>
<feature type="binding site" evidence="2">
    <location>
        <begin position="428"/>
        <end position="435"/>
    </location>
    <ligand>
        <name>GTP</name>
        <dbReference type="ChEBI" id="CHEBI:37565"/>
    </ligand>
</feature>
<feature type="binding site" evidence="2">
    <location>
        <begin position="474"/>
        <end position="478"/>
    </location>
    <ligand>
        <name>GTP</name>
        <dbReference type="ChEBI" id="CHEBI:37565"/>
    </ligand>
</feature>
<feature type="binding site" evidence="2">
    <location>
        <begin position="528"/>
        <end position="531"/>
    </location>
    <ligand>
        <name>GTP</name>
        <dbReference type="ChEBI" id="CHEBI:37565"/>
    </ligand>
</feature>
<accession>Q03FS3</accession>
<evidence type="ECO:0000250" key="1"/>
<evidence type="ECO:0000255" key="2">
    <source>
        <dbReference type="HAMAP-Rule" id="MF_00100"/>
    </source>
</evidence>
<evidence type="ECO:0000256" key="3">
    <source>
        <dbReference type="SAM" id="MobiDB-lite"/>
    </source>
</evidence>